<accession>Q9SL92</accession>
<accession>P92975</accession>
<accession>Q8S4V8</accession>
<gene>
    <name evidence="8" type="primary">HCS1</name>
    <name evidence="11" type="ordered locus">At2g25710</name>
    <name evidence="12" type="ORF">F3N11.16</name>
</gene>
<protein>
    <recommendedName>
        <fullName evidence="10">Biotin--protein ligase 1, chloroplastic</fullName>
        <ecNumber evidence="7">6.3.4.-</ecNumber>
    </recommendedName>
    <alternativeName>
        <fullName evidence="8">Holocarboxylase synthetase 1</fullName>
    </alternativeName>
    <domain>
        <recommendedName>
            <fullName evidence="9">Biotin--[methylcrotonoyl-CoA-carboxylase] ligase</fullName>
            <ecNumber evidence="5 7">6.3.4.11</ecNumber>
        </recommendedName>
    </domain>
    <domain>
        <recommendedName>
            <fullName evidence="9">Biotin--[acetyl-CoA-carboxylase] ligase</fullName>
            <ecNumber evidence="5 7">6.3.4.15</ecNumber>
        </recommendedName>
    </domain>
</protein>
<evidence type="ECO:0000250" key="1">
    <source>
        <dbReference type="UniProtKB" id="P06709"/>
    </source>
</evidence>
<evidence type="ECO:0000255" key="2"/>
<evidence type="ECO:0000255" key="3">
    <source>
        <dbReference type="PROSITE-ProRule" id="PRU01067"/>
    </source>
</evidence>
<evidence type="ECO:0000269" key="4">
    <source>
    </source>
</evidence>
<evidence type="ECO:0000269" key="5">
    <source>
    </source>
</evidence>
<evidence type="ECO:0000269" key="6">
    <source>
    </source>
</evidence>
<evidence type="ECO:0000269" key="7">
    <source>
    </source>
</evidence>
<evidence type="ECO:0000303" key="8">
    <source>
    </source>
</evidence>
<evidence type="ECO:0000303" key="9">
    <source>
    </source>
</evidence>
<evidence type="ECO:0000305" key="10"/>
<evidence type="ECO:0000312" key="11">
    <source>
        <dbReference type="Araport" id="AT2G25710"/>
    </source>
</evidence>
<evidence type="ECO:0000312" key="12">
    <source>
        <dbReference type="EMBL" id="AAD31371.2"/>
    </source>
</evidence>
<sequence>MEAVRSTTTLSNFHLLNILVLRSLKPLHRLSFSFSASAMESDASCSLVLCGKSSVETEVAKGLKNKNSLKLPDNTKVSLILESEAKNLVKDDDNSFNLSLFMNSIITHRFGRFLIWSPRLSSTHDVVSHNFSELPVGSVCVTDIQFKGRGRTKNVWESPKGCLMYSFTLEMEDGRVVPLIQYVVSLAVTEAVKDVCDKKGLPYIDVKIKWPNDLYVNGLKVGGILCTSTYRSKKFNVSVGVGLNVDNGQPTTCLNAVLKGMAPESNLLKREEILGAFFHKFEKFFDLFMDQGFKSLEELYYRTWLHSEQRVIVEDKVEDQVVQNVVTIQGLTSSGYLLAVGDDNQMYELHPDGNSFDFFKGLVRRKI</sequence>
<organism>
    <name type="scientific">Arabidopsis thaliana</name>
    <name type="common">Mouse-ear cress</name>
    <dbReference type="NCBI Taxonomy" id="3702"/>
    <lineage>
        <taxon>Eukaryota</taxon>
        <taxon>Viridiplantae</taxon>
        <taxon>Streptophyta</taxon>
        <taxon>Embryophyta</taxon>
        <taxon>Tracheophyta</taxon>
        <taxon>Spermatophyta</taxon>
        <taxon>Magnoliopsida</taxon>
        <taxon>eudicotyledons</taxon>
        <taxon>Gunneridae</taxon>
        <taxon>Pentapetalae</taxon>
        <taxon>rosids</taxon>
        <taxon>malvids</taxon>
        <taxon>Brassicales</taxon>
        <taxon>Brassicaceae</taxon>
        <taxon>Camelineae</taxon>
        <taxon>Arabidopsis</taxon>
    </lineage>
</organism>
<reference key="1">
    <citation type="journal article" date="1997" name="Biochem. J.">
        <title>Evidence for multiple forms of biotin holocarboxylase synthetase in pea (Pisum sativum) and in Arabidopsis thaliana: subcellular fractionation studies and isolation of a cDNA clone.</title>
        <authorList>
            <person name="Tissot G."/>
            <person name="Douce R."/>
            <person name="Alban C."/>
        </authorList>
    </citation>
    <scope>NUCLEOTIDE SEQUENCE [MRNA]</scope>
    <scope>FUNCTION</scope>
    <source>
        <strain>cv. Columbia</strain>
        <tissue>Leaf</tissue>
    </source>
</reference>
<reference key="2">
    <citation type="journal article" date="2002" name="J. Biol. Chem.">
        <title>Molecular characterization of a second copy of holocarboxylase synthetase gene (hcs2) in Arabidopsis thaliana.</title>
        <authorList>
            <person name="Denis L."/>
            <person name="Grossemy M."/>
            <person name="Douce R."/>
            <person name="Alban C."/>
        </authorList>
    </citation>
    <scope>NUCLEOTIDE SEQUENCE [GENOMIC DNA]</scope>
    <scope>TISSUE SPECIFICITY</scope>
    <source>
        <strain>cv. Wassilewskija</strain>
    </source>
</reference>
<reference key="3">
    <citation type="journal article" date="1999" name="Nature">
        <title>Sequence and analysis of chromosome 2 of the plant Arabidopsis thaliana.</title>
        <authorList>
            <person name="Lin X."/>
            <person name="Kaul S."/>
            <person name="Rounsley S.D."/>
            <person name="Shea T.P."/>
            <person name="Benito M.-I."/>
            <person name="Town C.D."/>
            <person name="Fujii C.Y."/>
            <person name="Mason T.M."/>
            <person name="Bowman C.L."/>
            <person name="Barnstead M.E."/>
            <person name="Feldblyum T.V."/>
            <person name="Buell C.R."/>
            <person name="Ketchum K.A."/>
            <person name="Lee J.J."/>
            <person name="Ronning C.M."/>
            <person name="Koo H.L."/>
            <person name="Moffat K.S."/>
            <person name="Cronin L.A."/>
            <person name="Shen M."/>
            <person name="Pai G."/>
            <person name="Van Aken S."/>
            <person name="Umayam L."/>
            <person name="Tallon L.J."/>
            <person name="Gill J.E."/>
            <person name="Adams M.D."/>
            <person name="Carrera A.J."/>
            <person name="Creasy T.H."/>
            <person name="Goodman H.M."/>
            <person name="Somerville C.R."/>
            <person name="Copenhaver G.P."/>
            <person name="Preuss D."/>
            <person name="Nierman W.C."/>
            <person name="White O."/>
            <person name="Eisen J.A."/>
            <person name="Salzberg S.L."/>
            <person name="Fraser C.M."/>
            <person name="Venter J.C."/>
        </authorList>
    </citation>
    <scope>NUCLEOTIDE SEQUENCE [LARGE SCALE GENOMIC DNA]</scope>
    <source>
        <strain>cv. Columbia</strain>
    </source>
</reference>
<reference key="4">
    <citation type="journal article" date="2017" name="Plant J.">
        <title>Araport11: a complete reannotation of the Arabidopsis thaliana reference genome.</title>
        <authorList>
            <person name="Cheng C.Y."/>
            <person name="Krishnakumar V."/>
            <person name="Chan A.P."/>
            <person name="Thibaud-Nissen F."/>
            <person name="Schobel S."/>
            <person name="Town C.D."/>
        </authorList>
    </citation>
    <scope>GENOME REANNOTATION</scope>
    <source>
        <strain>cv. Columbia</strain>
    </source>
</reference>
<reference key="5">
    <citation type="submission" date="2006-03" db="EMBL/GenBank/DDBJ databases">
        <title>Arabidopsis ORF clones.</title>
        <authorList>
            <person name="Shinn P."/>
            <person name="Chen H."/>
            <person name="Kim C.J."/>
            <person name="Ecker J.R."/>
        </authorList>
    </citation>
    <scope>NUCLEOTIDE SEQUENCE [LARGE SCALE MRNA]</scope>
    <source>
        <strain>cv. Columbia</strain>
    </source>
</reference>
<reference key="6">
    <citation type="journal article" date="1998" name="Eur. J. Biochem.">
        <title>Purification and properties of the chloroplastic form of biotin holocarboxylase synthetase from Arabidopsis thaliana overexpressed in Escherichia coli.</title>
        <authorList>
            <person name="Tissot G."/>
            <person name="Pepin R."/>
            <person name="Job D."/>
            <person name="Douce R."/>
            <person name="Alban C."/>
        </authorList>
    </citation>
    <scope>FUNCTION</scope>
    <scope>CATALYTIC ACTIVITY</scope>
    <scope>BIOPHYSICOCHEMICAL PROPERTIES</scope>
</reference>
<reference key="7">
    <citation type="journal article" date="2008" name="Plant Physiol.">
        <title>Dual targeting of Arabidopsis holocarboxylase synthetase1: a small upstream open reading frame regulates translation initiation and protein targeting.</title>
        <authorList>
            <person name="Puyaubert J."/>
            <person name="Denis L."/>
            <person name="Alban C."/>
        </authorList>
    </citation>
    <scope>FUNCTION</scope>
    <scope>CATALYTIC ACTIVITY</scope>
    <scope>SUBCELLULAR LOCATION</scope>
    <scope>ALTERNATIVE INITIATION</scope>
    <scope>TISSUE SPECIFICITY</scope>
    <scope>DISRUPTION PHENOTYPE</scope>
</reference>
<dbReference type="EC" id="6.3.4.-" evidence="7"/>
<dbReference type="EC" id="6.3.4.11" evidence="5 7"/>
<dbReference type="EC" id="6.3.4.15" evidence="5 7"/>
<dbReference type="EMBL" id="U41369">
    <property type="protein sequence ID" value="AAC49706.1"/>
    <property type="molecule type" value="mRNA"/>
</dbReference>
<dbReference type="EMBL" id="AF414937">
    <property type="protein sequence ID" value="AAL93108.1"/>
    <property type="molecule type" value="Genomic_DNA"/>
</dbReference>
<dbReference type="EMBL" id="AC006053">
    <property type="protein sequence ID" value="AAD31371.2"/>
    <property type="molecule type" value="Genomic_DNA"/>
</dbReference>
<dbReference type="EMBL" id="CP002685">
    <property type="protein sequence ID" value="AEC07740.1"/>
    <property type="molecule type" value="Genomic_DNA"/>
</dbReference>
<dbReference type="EMBL" id="CP002685">
    <property type="protein sequence ID" value="AEC07741.1"/>
    <property type="molecule type" value="Genomic_DNA"/>
</dbReference>
<dbReference type="EMBL" id="CP002685">
    <property type="protein sequence ID" value="ANM62688.1"/>
    <property type="molecule type" value="Genomic_DNA"/>
</dbReference>
<dbReference type="EMBL" id="CP002685">
    <property type="protein sequence ID" value="ANM62689.1"/>
    <property type="molecule type" value="Genomic_DNA"/>
</dbReference>
<dbReference type="EMBL" id="BT024748">
    <property type="protein sequence ID" value="ABD59086.1"/>
    <property type="molecule type" value="mRNA"/>
</dbReference>
<dbReference type="PIR" id="G84651">
    <property type="entry name" value="G84651"/>
</dbReference>
<dbReference type="RefSeq" id="NP_001324829.1">
    <molecule id="Q9SL92-2"/>
    <property type="nucleotide sequence ID" value="NM_001336012.1"/>
</dbReference>
<dbReference type="RefSeq" id="NP_001324830.1">
    <molecule id="Q9SL92-2"/>
    <property type="nucleotide sequence ID" value="NM_001336013.1"/>
</dbReference>
<dbReference type="RefSeq" id="NP_565605.1">
    <molecule id="Q9SL92-1"/>
    <property type="nucleotide sequence ID" value="NM_128130.3"/>
</dbReference>
<dbReference type="RefSeq" id="NP_850067.1">
    <molecule id="Q9SL92-1"/>
    <property type="nucleotide sequence ID" value="NM_179736.1"/>
</dbReference>
<dbReference type="SMR" id="Q9SL92"/>
<dbReference type="FunCoup" id="Q9SL92">
    <property type="interactions" value="278"/>
</dbReference>
<dbReference type="STRING" id="3702.Q9SL92"/>
<dbReference type="iPTMnet" id="Q9SL92"/>
<dbReference type="PaxDb" id="3702-AT2G25710.1"/>
<dbReference type="ProteomicsDB" id="247167">
    <molecule id="Q9SL92-1"/>
</dbReference>
<dbReference type="EnsemblPlants" id="AT2G25710.1">
    <molecule id="Q9SL92-1"/>
    <property type="protein sequence ID" value="AT2G25710.1"/>
    <property type="gene ID" value="AT2G25710"/>
</dbReference>
<dbReference type="EnsemblPlants" id="AT2G25710.2">
    <molecule id="Q9SL92-1"/>
    <property type="protein sequence ID" value="AT2G25710.2"/>
    <property type="gene ID" value="AT2G25710"/>
</dbReference>
<dbReference type="EnsemblPlants" id="AT2G25710.4">
    <molecule id="Q9SL92-2"/>
    <property type="protein sequence ID" value="AT2G25710.4"/>
    <property type="gene ID" value="AT2G25710"/>
</dbReference>
<dbReference type="EnsemblPlants" id="AT2G25710.5">
    <molecule id="Q9SL92-2"/>
    <property type="protein sequence ID" value="AT2G25710.5"/>
    <property type="gene ID" value="AT2G25710"/>
</dbReference>
<dbReference type="GeneID" id="817112"/>
<dbReference type="Gramene" id="AT2G25710.1">
    <molecule id="Q9SL92-1"/>
    <property type="protein sequence ID" value="AT2G25710.1"/>
    <property type="gene ID" value="AT2G25710"/>
</dbReference>
<dbReference type="Gramene" id="AT2G25710.2">
    <molecule id="Q9SL92-1"/>
    <property type="protein sequence ID" value="AT2G25710.2"/>
    <property type="gene ID" value="AT2G25710"/>
</dbReference>
<dbReference type="Gramene" id="AT2G25710.4">
    <molecule id="Q9SL92-2"/>
    <property type="protein sequence ID" value="AT2G25710.4"/>
    <property type="gene ID" value="AT2G25710"/>
</dbReference>
<dbReference type="Gramene" id="AT2G25710.5">
    <molecule id="Q9SL92-2"/>
    <property type="protein sequence ID" value="AT2G25710.5"/>
    <property type="gene ID" value="AT2G25710"/>
</dbReference>
<dbReference type="KEGG" id="ath:AT2G25710"/>
<dbReference type="Araport" id="AT2G25710"/>
<dbReference type="TAIR" id="AT2G25710">
    <property type="gene designation" value="HCS1"/>
</dbReference>
<dbReference type="eggNOG" id="KOG1536">
    <property type="taxonomic scope" value="Eukaryota"/>
</dbReference>
<dbReference type="HOGENOM" id="CLU_051096_2_0_1"/>
<dbReference type="InParanoid" id="Q9SL92"/>
<dbReference type="OMA" id="GHEENMS"/>
<dbReference type="PhylomeDB" id="Q9SL92"/>
<dbReference type="BioCyc" id="ARA:AT2G25710-MONOMER"/>
<dbReference type="BioCyc" id="MetaCyc:AT2G25710-MONOMER"/>
<dbReference type="PRO" id="PR:Q9SL92"/>
<dbReference type="Proteomes" id="UP000006548">
    <property type="component" value="Chromosome 2"/>
</dbReference>
<dbReference type="ExpressionAtlas" id="Q9SL92">
    <property type="expression patterns" value="baseline and differential"/>
</dbReference>
<dbReference type="GO" id="GO:0009507">
    <property type="term" value="C:chloroplast"/>
    <property type="evidence" value="ECO:0000314"/>
    <property type="project" value="TAIR"/>
</dbReference>
<dbReference type="GO" id="GO:0005829">
    <property type="term" value="C:cytosol"/>
    <property type="evidence" value="ECO:0000314"/>
    <property type="project" value="TAIR"/>
</dbReference>
<dbReference type="GO" id="GO:0009536">
    <property type="term" value="C:plastid"/>
    <property type="evidence" value="ECO:0000314"/>
    <property type="project" value="TAIR"/>
</dbReference>
<dbReference type="GO" id="GO:0005524">
    <property type="term" value="F:ATP binding"/>
    <property type="evidence" value="ECO:0007669"/>
    <property type="project" value="UniProtKB-KW"/>
</dbReference>
<dbReference type="GO" id="GO:0004077">
    <property type="term" value="F:biotin--[biotin carboxyl-carrier protein] ligase activity"/>
    <property type="evidence" value="ECO:0000314"/>
    <property type="project" value="TAIR"/>
</dbReference>
<dbReference type="GO" id="GO:0042966">
    <property type="term" value="P:biotin carboxyl carrier protein biosynthetic process"/>
    <property type="evidence" value="ECO:0000314"/>
    <property type="project" value="TAIR"/>
</dbReference>
<dbReference type="GO" id="GO:0036211">
    <property type="term" value="P:protein modification process"/>
    <property type="evidence" value="ECO:0007669"/>
    <property type="project" value="InterPro"/>
</dbReference>
<dbReference type="CDD" id="cd16442">
    <property type="entry name" value="BPL"/>
    <property type="match status" value="1"/>
</dbReference>
<dbReference type="FunFam" id="3.30.930.10:FF:000181">
    <property type="entry name" value="Holocarboxylase synthetase 2"/>
    <property type="match status" value="1"/>
</dbReference>
<dbReference type="Gene3D" id="3.30.930.10">
    <property type="entry name" value="Bira Bifunctional Protein, Domain 2"/>
    <property type="match status" value="1"/>
</dbReference>
<dbReference type="InterPro" id="IPR045864">
    <property type="entry name" value="aa-tRNA-synth_II/BPL/LPL"/>
</dbReference>
<dbReference type="InterPro" id="IPR004408">
    <property type="entry name" value="Biotin_CoA_COase_ligase"/>
</dbReference>
<dbReference type="InterPro" id="IPR003142">
    <property type="entry name" value="BPL_C"/>
</dbReference>
<dbReference type="InterPro" id="IPR004143">
    <property type="entry name" value="BPL_LPL_catalytic"/>
</dbReference>
<dbReference type="NCBIfam" id="TIGR00121">
    <property type="entry name" value="birA_ligase"/>
    <property type="match status" value="1"/>
</dbReference>
<dbReference type="PANTHER" id="PTHR12835">
    <property type="entry name" value="BIOTIN PROTEIN LIGASE"/>
    <property type="match status" value="1"/>
</dbReference>
<dbReference type="PANTHER" id="PTHR12835:SF5">
    <property type="entry name" value="BIOTIN--PROTEIN LIGASE"/>
    <property type="match status" value="1"/>
</dbReference>
<dbReference type="Pfam" id="PF02237">
    <property type="entry name" value="BPL_C"/>
    <property type="match status" value="1"/>
</dbReference>
<dbReference type="Pfam" id="PF03099">
    <property type="entry name" value="BPL_LplA_LipB"/>
    <property type="match status" value="1"/>
</dbReference>
<dbReference type="SUPFAM" id="SSF55681">
    <property type="entry name" value="Class II aaRS and biotin synthetases"/>
    <property type="match status" value="1"/>
</dbReference>
<dbReference type="PROSITE" id="PS51733">
    <property type="entry name" value="BPL_LPL_CATALYTIC"/>
    <property type="match status" value="1"/>
</dbReference>
<comment type="function">
    <text evidence="5 6 7">Plays a major role in biotin-dependent carboxylase biotinylation (PubMed:18156294). Catalyzes the addition of biotin to the biotin carboxyl carrier protein (BCCP) subunit of acetyl-CoA carboxylase (PubMed:18156294, PubMed:9173880, PubMed:9874227). Can also biotinylate methylcrotonyl-CoA carboxylase (PubMed:18156294, PubMed:9874227). Is responsible for most, if not all, biotin--protein ligase activity in Arabidopsis (PubMed:18156294). Is essential for plant viability and required for ovule development (PubMed:18156294).</text>
</comment>
<comment type="catalytic activity">
    <reaction evidence="5 7">
        <text>apo-[3-methylcrotonoyl-CoA:carbon-dioxide ligase (ADP-forming)] + biotin + ATP = holo-[3-methylcrotonoyl-CoA:carbon-dioxide ligase (ADP-forming)] + AMP + diphosphate + H(+)</text>
        <dbReference type="Rhea" id="RHEA:24376"/>
        <dbReference type="Rhea" id="RHEA-COMP:10514"/>
        <dbReference type="Rhea" id="RHEA-COMP:10515"/>
        <dbReference type="ChEBI" id="CHEBI:15378"/>
        <dbReference type="ChEBI" id="CHEBI:29969"/>
        <dbReference type="ChEBI" id="CHEBI:30616"/>
        <dbReference type="ChEBI" id="CHEBI:33019"/>
        <dbReference type="ChEBI" id="CHEBI:57586"/>
        <dbReference type="ChEBI" id="CHEBI:83144"/>
        <dbReference type="ChEBI" id="CHEBI:456215"/>
        <dbReference type="EC" id="6.3.4.11"/>
    </reaction>
    <physiologicalReaction direction="left-to-right" evidence="5 7">
        <dbReference type="Rhea" id="RHEA:24377"/>
    </physiologicalReaction>
</comment>
<comment type="catalytic activity">
    <reaction evidence="5 7">
        <text>biotin + L-lysyl-[protein] + ATP = N(6)-biotinyl-L-lysyl-[protein] + AMP + diphosphate + H(+)</text>
        <dbReference type="Rhea" id="RHEA:11756"/>
        <dbReference type="Rhea" id="RHEA-COMP:9752"/>
        <dbReference type="Rhea" id="RHEA-COMP:10505"/>
        <dbReference type="ChEBI" id="CHEBI:15378"/>
        <dbReference type="ChEBI" id="CHEBI:29969"/>
        <dbReference type="ChEBI" id="CHEBI:30616"/>
        <dbReference type="ChEBI" id="CHEBI:33019"/>
        <dbReference type="ChEBI" id="CHEBI:57586"/>
        <dbReference type="ChEBI" id="CHEBI:83144"/>
        <dbReference type="ChEBI" id="CHEBI:456215"/>
        <dbReference type="EC" id="6.3.4.15"/>
    </reaction>
    <physiologicalReaction direction="left-to-right" evidence="5 7">
        <dbReference type="Rhea" id="RHEA:11757"/>
    </physiologicalReaction>
</comment>
<comment type="biophysicochemical properties">
    <kinetics>
        <KM evidence="7">0.13 uM for biotin</KM>
        <KM evidence="7">4.4 uM for ATP</KM>
        <KM evidence="7">32 uM for methylcrotonoyl-CoA carboxylase</KM>
        <Vmax evidence="7">115.0 nmol/min/mg enzyme with biotin as substrate</Vmax>
        <Vmax evidence="7">127.0 nmol/min/mg enzyme with ATP as substrate</Vmax>
        <Vmax evidence="7">130.0 nmol/min/mg enzyme with methylcrotonoyl-CoA carboxylase as substrate</Vmax>
    </kinetics>
</comment>
<comment type="subcellular location">
    <molecule>Isoform 1</molecule>
    <subcellularLocation>
        <location evidence="5">Plastid</location>
        <location evidence="5">Chloroplast</location>
    </subcellularLocation>
</comment>
<comment type="subcellular location">
    <molecule>Isoform 2</molecule>
    <subcellularLocation>
        <location evidence="5">Cytoplasm</location>
        <location evidence="5">Cytosol</location>
    </subcellularLocation>
</comment>
<comment type="alternative products">
    <event type="alternative initiation"/>
    <isoform>
        <id>Q9SL92-1</id>
        <name>1</name>
        <name evidence="8">HCS-ATG1</name>
        <sequence type="displayed"/>
    </isoform>
    <isoform>
        <id>Q9SL92-2</id>
        <name>2</name>
        <name evidence="8">HCS-ATG2</name>
        <sequence type="described" ref="VSP_053916"/>
    </isoform>
</comment>
<comment type="tissue specificity">
    <text evidence="4 5">Expressed in roots, leaves, stems, flowers, siliques and seeds.</text>
</comment>
<comment type="disruption phenotype">
    <text evidence="5">Embryonic lethality when homozygous due to aborted ovules that had not been fertilized.</text>
</comment>
<comment type="miscellaneous">
    <text evidence="5">The alternative splicing of the 5'UTR of HCS1 mRNA controls the dual targeting of HCS1 protein through alternative use of distinct initiation codons. A small ORF (uORF24) located in the HCS1 mRNA 5'UTR is essential for the AUG choice. The presence of uORF24 favors the synthesis of a short protein form initiated at the second AUG, which consequently localizes in the cytosol. In the absence of uORF24, the translation initiation begins at the first AUG, allowing the production of a HCS1 protein headed by a transit peptide.</text>
</comment>
<comment type="similarity">
    <text evidence="10">Belongs to the biotin--protein ligase family.</text>
</comment>
<keyword id="KW-0024">Alternative initiation</keyword>
<keyword id="KW-0067">ATP-binding</keyword>
<keyword id="KW-0150">Chloroplast</keyword>
<keyword id="KW-0963">Cytoplasm</keyword>
<keyword id="KW-0436">Ligase</keyword>
<keyword id="KW-0511">Multifunctional enzyme</keyword>
<keyword id="KW-0547">Nucleotide-binding</keyword>
<keyword id="KW-0934">Plastid</keyword>
<keyword id="KW-1185">Reference proteome</keyword>
<keyword id="KW-0809">Transit peptide</keyword>
<feature type="transit peptide" description="Chloroplast" evidence="2">
    <location>
        <begin position="1"/>
        <end position="37"/>
    </location>
</feature>
<feature type="chain" id="PRO_0000425972" description="Biotin--protein ligase 1, chloroplastic">
    <location>
        <begin position="38"/>
        <end position="367"/>
    </location>
</feature>
<feature type="domain" description="BPL/LPL catalytic" evidence="3">
    <location>
        <begin position="105"/>
        <end position="289"/>
    </location>
</feature>
<feature type="binding site" evidence="1">
    <location>
        <begin position="122"/>
        <end position="124"/>
    </location>
    <ligand>
        <name>biotin</name>
        <dbReference type="ChEBI" id="CHEBI:57586"/>
    </ligand>
</feature>
<feature type="binding site" evidence="1">
    <location>
        <position position="145"/>
    </location>
    <ligand>
        <name>biotin</name>
        <dbReference type="ChEBI" id="CHEBI:57586"/>
    </ligand>
</feature>
<feature type="binding site" evidence="1">
    <location>
        <begin position="149"/>
        <end position="151"/>
    </location>
    <ligand>
        <name>biotin</name>
        <dbReference type="ChEBI" id="CHEBI:57586"/>
    </ligand>
</feature>
<feature type="binding site" evidence="1">
    <location>
        <position position="220"/>
    </location>
    <ligand>
        <name>biotin</name>
        <dbReference type="ChEBI" id="CHEBI:57586"/>
    </ligand>
</feature>
<feature type="splice variant" id="VSP_053916" description="In isoform 2." evidence="10">
    <location>
        <begin position="1"/>
        <end position="38"/>
    </location>
</feature>
<feature type="sequence conflict" description="In Ref. 2; AAL93108." evidence="10" ref="2">
    <original>H</original>
    <variation>R</variation>
    <location>
        <position position="28"/>
    </location>
</feature>
<name>HCS1_ARATH</name>
<proteinExistence type="evidence at protein level"/>